<name>MPG1_EREGS</name>
<dbReference type="EC" id="2.7.7.13"/>
<dbReference type="EMBL" id="AE016819">
    <property type="protein sequence ID" value="AAS53970.1"/>
    <property type="molecule type" value="Genomic_DNA"/>
</dbReference>
<dbReference type="RefSeq" id="NP_986146.1">
    <property type="nucleotide sequence ID" value="NM_212282.1"/>
</dbReference>
<dbReference type="SMR" id="Q752H4"/>
<dbReference type="FunCoup" id="Q752H4">
    <property type="interactions" value="1559"/>
</dbReference>
<dbReference type="STRING" id="284811.Q752H4"/>
<dbReference type="EnsemblFungi" id="AAS53970">
    <property type="protein sequence ID" value="AAS53970"/>
    <property type="gene ID" value="AGOS_AFR599W"/>
</dbReference>
<dbReference type="GeneID" id="4622430"/>
<dbReference type="KEGG" id="ago:AGOS_AFR599W"/>
<dbReference type="eggNOG" id="KOG1322">
    <property type="taxonomic scope" value="Eukaryota"/>
</dbReference>
<dbReference type="HOGENOM" id="CLU_029499_0_0_1"/>
<dbReference type="InParanoid" id="Q752H4"/>
<dbReference type="OMA" id="GPNCWIC"/>
<dbReference type="OrthoDB" id="1733332at2759"/>
<dbReference type="UniPathway" id="UPA00126">
    <property type="reaction ID" value="UER00930"/>
</dbReference>
<dbReference type="Proteomes" id="UP000000591">
    <property type="component" value="Chromosome VI"/>
</dbReference>
<dbReference type="GO" id="GO:0005737">
    <property type="term" value="C:cytoplasm"/>
    <property type="evidence" value="ECO:0000318"/>
    <property type="project" value="GO_Central"/>
</dbReference>
<dbReference type="GO" id="GO:0005525">
    <property type="term" value="F:GTP binding"/>
    <property type="evidence" value="ECO:0007669"/>
    <property type="project" value="UniProtKB-KW"/>
</dbReference>
<dbReference type="GO" id="GO:0004475">
    <property type="term" value="F:mannose-1-phosphate guanylyltransferase (GTP) activity"/>
    <property type="evidence" value="ECO:0000318"/>
    <property type="project" value="GO_Central"/>
</dbReference>
<dbReference type="GO" id="GO:0000032">
    <property type="term" value="P:cell wall mannoprotein biosynthetic process"/>
    <property type="evidence" value="ECO:0007669"/>
    <property type="project" value="EnsemblFungi"/>
</dbReference>
<dbReference type="GO" id="GO:0009298">
    <property type="term" value="P:GDP-mannose biosynthetic process"/>
    <property type="evidence" value="ECO:0000318"/>
    <property type="project" value="GO_Central"/>
</dbReference>
<dbReference type="GO" id="GO:0006486">
    <property type="term" value="P:protein glycosylation"/>
    <property type="evidence" value="ECO:0000318"/>
    <property type="project" value="GO_Central"/>
</dbReference>
<dbReference type="CDD" id="cd06425">
    <property type="entry name" value="M1P_guanylylT_B_like_N"/>
    <property type="match status" value="1"/>
</dbReference>
<dbReference type="FunFam" id="3.90.550.10:FF:000013">
    <property type="entry name" value="mannose-1-phosphate guanyltransferase beta"/>
    <property type="match status" value="1"/>
</dbReference>
<dbReference type="Gene3D" id="2.160.10.10">
    <property type="entry name" value="Hexapeptide repeat proteins"/>
    <property type="match status" value="1"/>
</dbReference>
<dbReference type="Gene3D" id="3.90.550.10">
    <property type="entry name" value="Spore Coat Polysaccharide Biosynthesis Protein SpsA, Chain A"/>
    <property type="match status" value="1"/>
</dbReference>
<dbReference type="InterPro" id="IPR056729">
    <property type="entry name" value="GMPPB_C"/>
</dbReference>
<dbReference type="InterPro" id="IPR045233">
    <property type="entry name" value="GMPPB_N"/>
</dbReference>
<dbReference type="InterPro" id="IPR018357">
    <property type="entry name" value="Hexapep_transf_CS"/>
</dbReference>
<dbReference type="InterPro" id="IPR050486">
    <property type="entry name" value="Mannose-1P_guanyltransferase"/>
</dbReference>
<dbReference type="InterPro" id="IPR005835">
    <property type="entry name" value="NTP_transferase_dom"/>
</dbReference>
<dbReference type="InterPro" id="IPR029044">
    <property type="entry name" value="Nucleotide-diphossugar_trans"/>
</dbReference>
<dbReference type="PANTHER" id="PTHR22572">
    <property type="entry name" value="SUGAR-1-PHOSPHATE GUANYL TRANSFERASE"/>
    <property type="match status" value="1"/>
</dbReference>
<dbReference type="Pfam" id="PF25087">
    <property type="entry name" value="GMPPB_C"/>
    <property type="match status" value="1"/>
</dbReference>
<dbReference type="Pfam" id="PF00483">
    <property type="entry name" value="NTP_transferase"/>
    <property type="match status" value="1"/>
</dbReference>
<dbReference type="SUPFAM" id="SSF53448">
    <property type="entry name" value="Nucleotide-diphospho-sugar transferases"/>
    <property type="match status" value="1"/>
</dbReference>
<dbReference type="PROSITE" id="PS00101">
    <property type="entry name" value="HEXAPEP_TRANSFERASES"/>
    <property type="match status" value="2"/>
</dbReference>
<accession>Q752H4</accession>
<organism>
    <name type="scientific">Eremothecium gossypii (strain ATCC 10895 / CBS 109.51 / FGSC 9923 / NRRL Y-1056)</name>
    <name type="common">Yeast</name>
    <name type="synonym">Ashbya gossypii</name>
    <dbReference type="NCBI Taxonomy" id="284811"/>
    <lineage>
        <taxon>Eukaryota</taxon>
        <taxon>Fungi</taxon>
        <taxon>Dikarya</taxon>
        <taxon>Ascomycota</taxon>
        <taxon>Saccharomycotina</taxon>
        <taxon>Saccharomycetes</taxon>
        <taxon>Saccharomycetales</taxon>
        <taxon>Saccharomycetaceae</taxon>
        <taxon>Eremothecium</taxon>
    </lineage>
</organism>
<keyword id="KW-0131">Cell cycle</keyword>
<keyword id="KW-0963">Cytoplasm</keyword>
<keyword id="KW-0342">GTP-binding</keyword>
<keyword id="KW-0547">Nucleotide-binding</keyword>
<keyword id="KW-0548">Nucleotidyltransferase</keyword>
<keyword id="KW-1185">Reference proteome</keyword>
<keyword id="KW-0808">Transferase</keyword>
<gene>
    <name type="primary">MPG1</name>
    <name type="ordered locus">AFR599W</name>
</gene>
<evidence type="ECO:0000250" key="1"/>
<evidence type="ECO:0000305" key="2"/>
<reference key="1">
    <citation type="journal article" date="2004" name="Science">
        <title>The Ashbya gossypii genome as a tool for mapping the ancient Saccharomyces cerevisiae genome.</title>
        <authorList>
            <person name="Dietrich F.S."/>
            <person name="Voegeli S."/>
            <person name="Brachat S."/>
            <person name="Lerch A."/>
            <person name="Gates K."/>
            <person name="Steiner S."/>
            <person name="Mohr C."/>
            <person name="Poehlmann R."/>
            <person name="Luedi P."/>
            <person name="Choi S."/>
            <person name="Wing R.A."/>
            <person name="Flavier A."/>
            <person name="Gaffney T.D."/>
            <person name="Philippsen P."/>
        </authorList>
    </citation>
    <scope>NUCLEOTIDE SEQUENCE [LARGE SCALE GENOMIC DNA]</scope>
    <source>
        <strain>ATCC 10895 / CBS 109.51 / FGSC 9923 / NRRL Y-1056</strain>
    </source>
</reference>
<reference key="2">
    <citation type="journal article" date="2013" name="G3 (Bethesda)">
        <title>Genomes of Ashbya fungi isolated from insects reveal four mating-type loci, numerous translocations, lack of transposons, and distinct gene duplications.</title>
        <authorList>
            <person name="Dietrich F.S."/>
            <person name="Voegeli S."/>
            <person name="Kuo S."/>
            <person name="Philippsen P."/>
        </authorList>
    </citation>
    <scope>GENOME REANNOTATION</scope>
    <source>
        <strain>ATCC 10895 / CBS 109.51 / FGSC 9923 / NRRL Y-1056</strain>
    </source>
</reference>
<feature type="chain" id="PRO_0000238482" description="Mannose-1-phosphate guanyltransferase">
    <location>
        <begin position="1"/>
        <end position="361"/>
    </location>
</feature>
<sequence>MKGLILVGGYGTRLRPLTLTVPKPLVEFCNRPMILHQIEALAAAGVTDIVLAVNYRPEVMVETLKKYEKQYGVSITFSVETEPLGTAGPLKLAEKVLKKDNSPFFVLNSDVICEYPFKELAAFHRAHGGKGTIVATKVDEPSKYGVIVHDIATPNLIDRFVEKPVEFVGNRINAGLYILNPEVIDLIELRPTSIEKETFPILVEQKSLYSFDLEGYWMDVGQPKDFLAGTVLYLNSLSKRHPEQLAKGDNIVGNVIIDPSAKISGSAKLGPDVVIGPNVTIGEGVRITRSVVLSDSTINDHSLVKSTIVGWHSTVGKWCRLEGCSVLGDDVEVKDEVYVNGGKVLPHKSISANVPKEAIIM</sequence>
<protein>
    <recommendedName>
        <fullName>Mannose-1-phosphate guanyltransferase</fullName>
        <ecNumber>2.7.7.13</ecNumber>
    </recommendedName>
    <alternativeName>
        <fullName>GDP-mannose pyrophosphorylase</fullName>
    </alternativeName>
    <alternativeName>
        <fullName>GTP-mannose-1-phosphate guanylyltransferase</fullName>
    </alternativeName>
</protein>
<proteinExistence type="inferred from homology"/>
<comment type="function">
    <text evidence="1">Involved in cell wall synthesis where it is required for glycosylation. Involved in cell cycle progression through cell-size checkpoint (By similarity).</text>
</comment>
<comment type="catalytic activity">
    <reaction>
        <text>alpha-D-mannose 1-phosphate + GTP + H(+) = GDP-alpha-D-mannose + diphosphate</text>
        <dbReference type="Rhea" id="RHEA:15229"/>
        <dbReference type="ChEBI" id="CHEBI:15378"/>
        <dbReference type="ChEBI" id="CHEBI:33019"/>
        <dbReference type="ChEBI" id="CHEBI:37565"/>
        <dbReference type="ChEBI" id="CHEBI:57527"/>
        <dbReference type="ChEBI" id="CHEBI:58409"/>
        <dbReference type="EC" id="2.7.7.13"/>
    </reaction>
</comment>
<comment type="pathway">
    <text>Nucleotide-sugar biosynthesis; GDP-alpha-D-mannose biosynthesis; GDP-alpha-D-mannose from alpha-D-mannose 1-phosphate (GTP route): step 1/1.</text>
</comment>
<comment type="subcellular location">
    <subcellularLocation>
        <location evidence="1">Cytoplasm</location>
    </subcellularLocation>
</comment>
<comment type="similarity">
    <text evidence="2">Belongs to the transferase hexapeptide repeat family.</text>
</comment>